<accession>Q04942</accession>
<accession>Q9AK20</accession>
<proteinExistence type="evidence at protein level"/>
<keyword id="KW-0963">Cytoplasm</keyword>
<keyword id="KW-0238">DNA-binding</keyword>
<keyword id="KW-0597">Phosphoprotein</keyword>
<keyword id="KW-1185">Reference proteome</keyword>
<keyword id="KW-0804">Transcription</keyword>
<keyword id="KW-0805">Transcription regulation</keyword>
<keyword id="KW-0902">Two-component regulatory system</keyword>
<gene>
    <name evidence="4" type="primary">afsQ1</name>
    <name type="ordered locus">SCO4907</name>
    <name type="ORF">2SCK8.33c</name>
</gene>
<feature type="chain" id="PRO_0000080993" description="Transcriptional regulatory protein AfsQ1">
    <location>
        <begin position="1"/>
        <end position="225"/>
    </location>
</feature>
<feature type="domain" description="Response regulatory" evidence="1">
    <location>
        <begin position="3"/>
        <end position="116"/>
    </location>
</feature>
<feature type="DNA-binding region" description="OmpR/PhoB-type" evidence="2">
    <location>
        <begin position="124"/>
        <end position="223"/>
    </location>
</feature>
<feature type="modified residue" description="4-aspartylphosphate" evidence="1">
    <location>
        <position position="52"/>
    </location>
</feature>
<feature type="mutagenesis site" description="Loss of protein's ability to stimulate antibiotic production and pigmentation." evidence="3">
    <original>D</original>
    <variation>E</variation>
    <location>
        <position position="52"/>
    </location>
</feature>
<feature type="sequence conflict" description="In Ref. 1; BAA01502." evidence="5" ref="1">
    <original>D</original>
    <variation>E</variation>
    <location>
        <position position="11"/>
    </location>
</feature>
<protein>
    <recommendedName>
        <fullName>Transcriptional regulatory protein AfsQ1</fullName>
    </recommendedName>
</protein>
<comment type="function">
    <text>Forms part of a two-component regulatory system AfsQ1/AfsQ2 involved in secondary metabolism.</text>
</comment>
<comment type="subcellular location">
    <subcellularLocation>
        <location>Cytoplasm</location>
    </subcellularLocation>
    <subcellularLocation>
        <location evidence="6">Cytoplasm</location>
        <location evidence="6">Nucleoid</location>
    </subcellularLocation>
</comment>
<comment type="PTM">
    <text evidence="5">Phosphorylated by AfsQ2.</text>
</comment>
<reference key="1">
    <citation type="journal article" date="1992" name="J. Bacteriol.">
        <title>A putative two-component regulatory system involved in secondary metabolism in Streptomyces spp.</title>
        <authorList>
            <person name="Ishizuka H."/>
            <person name="Horinouchi S."/>
            <person name="Kieser H.M."/>
            <person name="Hopwood D.A."/>
            <person name="Beppu T."/>
        </authorList>
    </citation>
    <scope>NUCLEOTIDE SEQUENCE [GENOMIC DNA]</scope>
    <scope>MUTAGENESIS OF ASP-52</scope>
    <source>
        <strain>A3(2) / NRRL B-16638</strain>
    </source>
</reference>
<reference key="2">
    <citation type="journal article" date="2002" name="Nature">
        <title>Complete genome sequence of the model actinomycete Streptomyces coelicolor A3(2).</title>
        <authorList>
            <person name="Bentley S.D."/>
            <person name="Chater K.F."/>
            <person name="Cerdeno-Tarraga A.-M."/>
            <person name="Challis G.L."/>
            <person name="Thomson N.R."/>
            <person name="James K.D."/>
            <person name="Harris D.E."/>
            <person name="Quail M.A."/>
            <person name="Kieser H."/>
            <person name="Harper D."/>
            <person name="Bateman A."/>
            <person name="Brown S."/>
            <person name="Chandra G."/>
            <person name="Chen C.W."/>
            <person name="Collins M."/>
            <person name="Cronin A."/>
            <person name="Fraser A."/>
            <person name="Goble A."/>
            <person name="Hidalgo J."/>
            <person name="Hornsby T."/>
            <person name="Howarth S."/>
            <person name="Huang C.-H."/>
            <person name="Kieser T."/>
            <person name="Larke L."/>
            <person name="Murphy L.D."/>
            <person name="Oliver K."/>
            <person name="O'Neil S."/>
            <person name="Rabbinowitsch E."/>
            <person name="Rajandream M.A."/>
            <person name="Rutherford K.M."/>
            <person name="Rutter S."/>
            <person name="Seeger K."/>
            <person name="Saunders D."/>
            <person name="Sharp S."/>
            <person name="Squares R."/>
            <person name="Squares S."/>
            <person name="Taylor K."/>
            <person name="Warren T."/>
            <person name="Wietzorrek A."/>
            <person name="Woodward J.R."/>
            <person name="Barrell B.G."/>
            <person name="Parkhill J."/>
            <person name="Hopwood D.A."/>
        </authorList>
    </citation>
    <scope>NUCLEOTIDE SEQUENCE [LARGE SCALE GENOMIC DNA]</scope>
    <source>
        <strain>ATCC BAA-471 / A3(2) / M145</strain>
    </source>
</reference>
<reference key="3">
    <citation type="journal article" date="2013" name="J. Proteomics">
        <title>Proteomic survey of the Streptomyces coelicolor nucleoid.</title>
        <authorList>
            <person name="Bradshaw E."/>
            <person name="Saalbach G."/>
            <person name="McArthur M."/>
        </authorList>
    </citation>
    <scope>IDENTIFICATION BY MASS SPECTROMETRY</scope>
    <scope>SUBCELLULAR LOCATION</scope>
    <source>
        <strain>ATCC BAA-471 / A3(2) / M145</strain>
    </source>
</reference>
<name>AFSQ1_STRCO</name>
<organism>
    <name type="scientific">Streptomyces coelicolor (strain ATCC BAA-471 / A3(2) / M145)</name>
    <dbReference type="NCBI Taxonomy" id="100226"/>
    <lineage>
        <taxon>Bacteria</taxon>
        <taxon>Bacillati</taxon>
        <taxon>Actinomycetota</taxon>
        <taxon>Actinomycetes</taxon>
        <taxon>Kitasatosporales</taxon>
        <taxon>Streptomycetaceae</taxon>
        <taxon>Streptomyces</taxon>
        <taxon>Streptomyces albidoflavus group</taxon>
    </lineage>
</organism>
<evidence type="ECO:0000255" key="1">
    <source>
        <dbReference type="PROSITE-ProRule" id="PRU00169"/>
    </source>
</evidence>
<evidence type="ECO:0000255" key="2">
    <source>
        <dbReference type="PROSITE-ProRule" id="PRU01091"/>
    </source>
</evidence>
<evidence type="ECO:0000269" key="3">
    <source>
    </source>
</evidence>
<evidence type="ECO:0000303" key="4">
    <source>
    </source>
</evidence>
<evidence type="ECO:0000305" key="5"/>
<evidence type="ECO:0000305" key="6">
    <source>
    </source>
</evidence>
<dbReference type="EMBL" id="D10654">
    <property type="protein sequence ID" value="BAA01502.1"/>
    <property type="molecule type" value="Genomic_DNA"/>
</dbReference>
<dbReference type="EMBL" id="AL939121">
    <property type="protein sequence ID" value="CAC33072.1"/>
    <property type="molecule type" value="Genomic_DNA"/>
</dbReference>
<dbReference type="PIR" id="A45270">
    <property type="entry name" value="A45270"/>
</dbReference>
<dbReference type="RefSeq" id="NP_629060.1">
    <property type="nucleotide sequence ID" value="NC_003888.3"/>
</dbReference>
<dbReference type="RefSeq" id="WP_003974066.1">
    <property type="nucleotide sequence ID" value="NZ_VNID01000016.1"/>
</dbReference>
<dbReference type="SMR" id="Q04942"/>
<dbReference type="STRING" id="100226.gene:17762556"/>
<dbReference type="PaxDb" id="100226-SCO4907"/>
<dbReference type="GeneID" id="97462741"/>
<dbReference type="KEGG" id="sco:SCO4907"/>
<dbReference type="PATRIC" id="fig|100226.15.peg.4986"/>
<dbReference type="eggNOG" id="COG0745">
    <property type="taxonomic scope" value="Bacteria"/>
</dbReference>
<dbReference type="HOGENOM" id="CLU_000445_30_4_11"/>
<dbReference type="InParanoid" id="Q04942"/>
<dbReference type="OrthoDB" id="3197131at2"/>
<dbReference type="PhylomeDB" id="Q04942"/>
<dbReference type="Proteomes" id="UP000001973">
    <property type="component" value="Chromosome"/>
</dbReference>
<dbReference type="GO" id="GO:0005829">
    <property type="term" value="C:cytosol"/>
    <property type="evidence" value="ECO:0000318"/>
    <property type="project" value="GO_Central"/>
</dbReference>
<dbReference type="GO" id="GO:0009295">
    <property type="term" value="C:nucleoid"/>
    <property type="evidence" value="ECO:0007669"/>
    <property type="project" value="UniProtKB-SubCell"/>
</dbReference>
<dbReference type="GO" id="GO:0032993">
    <property type="term" value="C:protein-DNA complex"/>
    <property type="evidence" value="ECO:0000318"/>
    <property type="project" value="GO_Central"/>
</dbReference>
<dbReference type="GO" id="GO:0000156">
    <property type="term" value="F:phosphorelay response regulator activity"/>
    <property type="evidence" value="ECO:0000318"/>
    <property type="project" value="GO_Central"/>
</dbReference>
<dbReference type="GO" id="GO:0000976">
    <property type="term" value="F:transcription cis-regulatory region binding"/>
    <property type="evidence" value="ECO:0000318"/>
    <property type="project" value="GO_Central"/>
</dbReference>
<dbReference type="GO" id="GO:0006355">
    <property type="term" value="P:regulation of DNA-templated transcription"/>
    <property type="evidence" value="ECO:0000318"/>
    <property type="project" value="GO_Central"/>
</dbReference>
<dbReference type="CDD" id="cd17574">
    <property type="entry name" value="REC_OmpR"/>
    <property type="match status" value="1"/>
</dbReference>
<dbReference type="CDD" id="cd00383">
    <property type="entry name" value="trans_reg_C"/>
    <property type="match status" value="1"/>
</dbReference>
<dbReference type="FunFam" id="3.40.50.2300:FF:000034">
    <property type="entry name" value="DNA-binding response OmpR family regulator"/>
    <property type="match status" value="1"/>
</dbReference>
<dbReference type="FunFam" id="1.10.10.10:FF:000018">
    <property type="entry name" value="DNA-binding response regulator ResD"/>
    <property type="match status" value="1"/>
</dbReference>
<dbReference type="Gene3D" id="3.40.50.2300">
    <property type="match status" value="1"/>
</dbReference>
<dbReference type="Gene3D" id="6.10.250.690">
    <property type="match status" value="1"/>
</dbReference>
<dbReference type="Gene3D" id="1.10.10.10">
    <property type="entry name" value="Winged helix-like DNA-binding domain superfamily/Winged helix DNA-binding domain"/>
    <property type="match status" value="1"/>
</dbReference>
<dbReference type="InterPro" id="IPR011006">
    <property type="entry name" value="CheY-like_superfamily"/>
</dbReference>
<dbReference type="InterPro" id="IPR001867">
    <property type="entry name" value="OmpR/PhoB-type_DNA-bd"/>
</dbReference>
<dbReference type="InterPro" id="IPR001789">
    <property type="entry name" value="Sig_transdc_resp-reg_receiver"/>
</dbReference>
<dbReference type="InterPro" id="IPR039420">
    <property type="entry name" value="WalR-like"/>
</dbReference>
<dbReference type="InterPro" id="IPR036388">
    <property type="entry name" value="WH-like_DNA-bd_sf"/>
</dbReference>
<dbReference type="PANTHER" id="PTHR48111:SF21">
    <property type="entry name" value="DNA-BINDING DUAL MASTER TRANSCRIPTIONAL REGULATOR RPAA"/>
    <property type="match status" value="1"/>
</dbReference>
<dbReference type="PANTHER" id="PTHR48111">
    <property type="entry name" value="REGULATOR OF RPOS"/>
    <property type="match status" value="1"/>
</dbReference>
<dbReference type="Pfam" id="PF00072">
    <property type="entry name" value="Response_reg"/>
    <property type="match status" value="1"/>
</dbReference>
<dbReference type="Pfam" id="PF00486">
    <property type="entry name" value="Trans_reg_C"/>
    <property type="match status" value="1"/>
</dbReference>
<dbReference type="SMART" id="SM00448">
    <property type="entry name" value="REC"/>
    <property type="match status" value="1"/>
</dbReference>
<dbReference type="SMART" id="SM00862">
    <property type="entry name" value="Trans_reg_C"/>
    <property type="match status" value="1"/>
</dbReference>
<dbReference type="SUPFAM" id="SSF52172">
    <property type="entry name" value="CheY-like"/>
    <property type="match status" value="1"/>
</dbReference>
<dbReference type="PROSITE" id="PS51755">
    <property type="entry name" value="OMPR_PHOB"/>
    <property type="match status" value="1"/>
</dbReference>
<dbReference type="PROSITE" id="PS50110">
    <property type="entry name" value="RESPONSE_REGULATORY"/>
    <property type="match status" value="1"/>
</dbReference>
<sequence>MPSLLLIEDDDAIRTALELSLTRQGHRVATAASGEDGLKLLREQRPDLIVLDVMLPGIDGFEVCRRIRRTDQLPIILLTARNDDIDVVVGLESGADDYVVKPVQGRVLDARIRAVLRRGERESTDSASFGSLVIDRSAMTVTKNGEDLQLTPTELRLLLELSRRPGQALSRQQLLRLVWEHDYLGDSRLVDACVQRLRAKVEDVPSSPTLIRTVRGVGYRLDPPQ</sequence>